<reference key="1">
    <citation type="journal article" date="2003" name="Nature">
        <title>The male-specific region of the human Y chromosome is a mosaic of discrete sequence classes.</title>
        <authorList>
            <person name="Skaletsky H."/>
            <person name="Kuroda-Kawaguchi T."/>
            <person name="Minx P.J."/>
            <person name="Cordum H.S."/>
            <person name="Hillier L.W."/>
            <person name="Brown L.G."/>
            <person name="Repping S."/>
            <person name="Pyntikova T."/>
            <person name="Ali J."/>
            <person name="Bieri T."/>
            <person name="Chinwalla A."/>
            <person name="Delehaunty A."/>
            <person name="Delehaunty K."/>
            <person name="Du H."/>
            <person name="Fewell G."/>
            <person name="Fulton L."/>
            <person name="Fulton R."/>
            <person name="Graves T.A."/>
            <person name="Hou S.-F."/>
            <person name="Latrielle P."/>
            <person name="Leonard S."/>
            <person name="Mardis E."/>
            <person name="Maupin R."/>
            <person name="McPherson J."/>
            <person name="Miner T."/>
            <person name="Nash W."/>
            <person name="Nguyen C."/>
            <person name="Ozersky P."/>
            <person name="Pepin K."/>
            <person name="Rock S."/>
            <person name="Rohlfing T."/>
            <person name="Scott K."/>
            <person name="Schultz B."/>
            <person name="Strong C."/>
            <person name="Tin-Wollam A."/>
            <person name="Yang S.-P."/>
            <person name="Waterston R.H."/>
            <person name="Wilson R.K."/>
            <person name="Rozen S."/>
            <person name="Page D.C."/>
        </authorList>
    </citation>
    <scope>NUCLEOTIDE SEQUENCE [LARGE SCALE GENOMIC DNA]</scope>
</reference>
<dbReference type="EMBL" id="AC010141">
    <property type="status" value="NOT_ANNOTATED_CDS"/>
    <property type="molecule type" value="Genomic_DNA"/>
</dbReference>
<dbReference type="CCDS" id="CCDS35479.1"/>
<dbReference type="RefSeq" id="NP_001006121.1">
    <property type="nucleotide sequence ID" value="NM_001006121.4"/>
</dbReference>
<dbReference type="SMR" id="A6NDE4"/>
<dbReference type="BioGRID" id="132079">
    <property type="interactions" value="1"/>
</dbReference>
<dbReference type="FunCoup" id="A6NDE4">
    <property type="interactions" value="58"/>
</dbReference>
<dbReference type="IntAct" id="A6NDE4">
    <property type="interactions" value="1"/>
</dbReference>
<dbReference type="STRING" id="9606.ENSP00000372484"/>
<dbReference type="iPTMnet" id="A6NDE4"/>
<dbReference type="PhosphoSitePlus" id="A6NDE4"/>
<dbReference type="BioMuta" id="RBMY1B"/>
<dbReference type="MassIVE" id="A6NDE4"/>
<dbReference type="PeptideAtlas" id="A6NDE4"/>
<dbReference type="Antibodypedia" id="70951">
    <property type="antibodies" value="2 antibodies from 2 providers"/>
</dbReference>
<dbReference type="DNASU" id="378948"/>
<dbReference type="Ensembl" id="ENST00000383020.7">
    <property type="protein sequence ID" value="ENSP00000372484.3"/>
    <property type="gene ID" value="ENSG00000242875.7"/>
</dbReference>
<dbReference type="GeneID" id="378948"/>
<dbReference type="KEGG" id="hsa:378948"/>
<dbReference type="MANE-Select" id="ENST00000383020.7">
    <property type="protein sequence ID" value="ENSP00000372484.3"/>
    <property type="RefSeq nucleotide sequence ID" value="NM_001006121.4"/>
    <property type="RefSeq protein sequence ID" value="NP_001006121.1"/>
</dbReference>
<dbReference type="UCSC" id="uc004fuo.4">
    <property type="organism name" value="human"/>
</dbReference>
<dbReference type="AGR" id="HGNC:23914"/>
<dbReference type="CTD" id="378948"/>
<dbReference type="GeneCards" id="RBMY1B"/>
<dbReference type="HGNC" id="HGNC:23914">
    <property type="gene designation" value="RBMY1B"/>
</dbReference>
<dbReference type="HPA" id="ENSG00000242875">
    <property type="expression patterns" value="Not detected"/>
</dbReference>
<dbReference type="neXtProt" id="NX_A6NDE4"/>
<dbReference type="PharmGKB" id="PA134872137"/>
<dbReference type="VEuPathDB" id="HostDB:ENSG00000242875"/>
<dbReference type="GeneTree" id="ENSGT00940000163524"/>
<dbReference type="HOGENOM" id="CLU_042286_0_0_1"/>
<dbReference type="InParanoid" id="A6NDE4"/>
<dbReference type="PAN-GO" id="A6NDE4">
    <property type="GO annotations" value="3 GO annotations based on evolutionary models"/>
</dbReference>
<dbReference type="PhylomeDB" id="A6NDE4"/>
<dbReference type="TreeFam" id="TF331833"/>
<dbReference type="PathwayCommons" id="A6NDE4"/>
<dbReference type="BioGRID-ORCS" id="378948">
    <property type="hits" value="9 hits in 284 CRISPR screens"/>
</dbReference>
<dbReference type="GenomeRNAi" id="378948"/>
<dbReference type="Pharos" id="A6NDE4">
    <property type="development level" value="Tbio"/>
</dbReference>
<dbReference type="PRO" id="PR:A6NDE4"/>
<dbReference type="Proteomes" id="UP000005640">
    <property type="component" value="Chromosome Y"/>
</dbReference>
<dbReference type="RNAct" id="A6NDE4">
    <property type="molecule type" value="protein"/>
</dbReference>
<dbReference type="Bgee" id="ENSG00000242875">
    <property type="expression patterns" value="Expressed in male germ line stem cell (sensu Vertebrata) in testis and 4 other cell types or tissues"/>
</dbReference>
<dbReference type="GO" id="GO:0005730">
    <property type="term" value="C:nucleolus"/>
    <property type="evidence" value="ECO:0000314"/>
    <property type="project" value="HPA"/>
</dbReference>
<dbReference type="GO" id="GO:0005654">
    <property type="term" value="C:nucleoplasm"/>
    <property type="evidence" value="ECO:0000314"/>
    <property type="project" value="HPA"/>
</dbReference>
<dbReference type="GO" id="GO:0005634">
    <property type="term" value="C:nucleus"/>
    <property type="evidence" value="ECO:0000304"/>
    <property type="project" value="UniProtKB"/>
</dbReference>
<dbReference type="GO" id="GO:0005681">
    <property type="term" value="C:spliceosomal complex"/>
    <property type="evidence" value="ECO:0000318"/>
    <property type="project" value="GO_Central"/>
</dbReference>
<dbReference type="GO" id="GO:0003723">
    <property type="term" value="F:RNA binding"/>
    <property type="evidence" value="ECO:0000318"/>
    <property type="project" value="GO_Central"/>
</dbReference>
<dbReference type="GO" id="GO:0008584">
    <property type="term" value="P:male gonad development"/>
    <property type="evidence" value="ECO:0000315"/>
    <property type="project" value="UniProtKB"/>
</dbReference>
<dbReference type="GO" id="GO:0006397">
    <property type="term" value="P:mRNA processing"/>
    <property type="evidence" value="ECO:0007669"/>
    <property type="project" value="UniProtKB-KW"/>
</dbReference>
<dbReference type="GO" id="GO:0048026">
    <property type="term" value="P:positive regulation of mRNA splicing, via spliceosome"/>
    <property type="evidence" value="ECO:0000318"/>
    <property type="project" value="GO_Central"/>
</dbReference>
<dbReference type="GO" id="GO:0008380">
    <property type="term" value="P:RNA splicing"/>
    <property type="evidence" value="ECO:0007669"/>
    <property type="project" value="UniProtKB-KW"/>
</dbReference>
<dbReference type="GO" id="GO:0007283">
    <property type="term" value="P:spermatogenesis"/>
    <property type="evidence" value="ECO:0000304"/>
    <property type="project" value="UniProtKB"/>
</dbReference>
<dbReference type="CDD" id="cd12382">
    <property type="entry name" value="RRM_RBMX_like"/>
    <property type="match status" value="1"/>
</dbReference>
<dbReference type="FunFam" id="3.30.70.330:FF:000470">
    <property type="entry name" value="RNA-binding motif protein, Y chromosome, family 1 member F/J"/>
    <property type="match status" value="1"/>
</dbReference>
<dbReference type="Gene3D" id="3.30.70.330">
    <property type="match status" value="1"/>
</dbReference>
<dbReference type="InterPro" id="IPR012677">
    <property type="entry name" value="Nucleotide-bd_a/b_plait_sf"/>
</dbReference>
<dbReference type="InterPro" id="IPR035979">
    <property type="entry name" value="RBD_domain_sf"/>
</dbReference>
<dbReference type="InterPro" id="IPR050441">
    <property type="entry name" value="RBM"/>
</dbReference>
<dbReference type="InterPro" id="IPR012604">
    <property type="entry name" value="RBM1CTR"/>
</dbReference>
<dbReference type="InterPro" id="IPR000504">
    <property type="entry name" value="RRM_dom"/>
</dbReference>
<dbReference type="PANTHER" id="PTHR48034">
    <property type="entry name" value="TRANSFORMER-2 SEX-DETERMINING PROTEIN-RELATED"/>
    <property type="match status" value="1"/>
</dbReference>
<dbReference type="Pfam" id="PF08081">
    <property type="entry name" value="RBM1CTR"/>
    <property type="match status" value="1"/>
</dbReference>
<dbReference type="Pfam" id="PF00076">
    <property type="entry name" value="RRM_1"/>
    <property type="match status" value="1"/>
</dbReference>
<dbReference type="SMART" id="SM00360">
    <property type="entry name" value="RRM"/>
    <property type="match status" value="1"/>
</dbReference>
<dbReference type="SUPFAM" id="SSF54928">
    <property type="entry name" value="RNA-binding domain, RBD"/>
    <property type="match status" value="1"/>
</dbReference>
<dbReference type="PROSITE" id="PS50102">
    <property type="entry name" value="RRM"/>
    <property type="match status" value="1"/>
</dbReference>
<accession>A6NDE4</accession>
<accession>A6NCZ8</accession>
<accession>A6NE80</accession>
<accession>A8MSJ6</accession>
<proteinExistence type="evidence at transcript level"/>
<comment type="function">
    <text>RNA-binding protein which may be involved in spermatogenesis. Required for sperm development, possibly by participating in pre-mRNA splicing in the testis.</text>
</comment>
<comment type="subunit">
    <text>Interacts with splicing factor proteins SFRS3/SRP20, TRA2B/SFRS10, KHDRBS1/SAM68 and KHDRBS3.</text>
</comment>
<comment type="subcellular location">
    <subcellularLocation>
        <location>Nucleus</location>
    </subcellularLocation>
</comment>
<comment type="tissue specificity">
    <text>Testis-specific.</text>
</comment>
<comment type="developmental stage">
    <text>Expressed in all of the transcriptionally active stages of germ cell development from spermatogonia through spermatocytes to round spermatids.</text>
</comment>
<comment type="miscellaneous">
    <text>The RBMY1 proteins are encoded by repeated regions of the Y chromosome, mostly within the AZFb region. The exact number of functional copies is unclear and may vary between individuals, and some of them may represent pseudogenes. The proteins are very similar, which makes the characterization of each protein difficult. Thus, most experiments do not discriminate between the different members. One can therefore suppose that reported interactions with a RBMY1 protein involve all the proteins.</text>
</comment>
<feature type="chain" id="PRO_0000341537" description="RNA-binding motif protein, Y chromosome, family 1 member B">
    <location>
        <begin position="1"/>
        <end position="496"/>
    </location>
</feature>
<feature type="domain" description="RRM" evidence="1">
    <location>
        <begin position="8"/>
        <end position="85"/>
    </location>
</feature>
<feature type="region of interest" description="Disordered" evidence="2">
    <location>
        <begin position="67"/>
        <end position="349"/>
    </location>
</feature>
<feature type="region of interest" description="Disordered" evidence="2">
    <location>
        <begin position="452"/>
        <end position="496"/>
    </location>
</feature>
<feature type="compositionally biased region" description="Low complexity" evidence="2">
    <location>
        <begin position="97"/>
        <end position="114"/>
    </location>
</feature>
<feature type="compositionally biased region" description="Low complexity" evidence="2">
    <location>
        <begin position="149"/>
        <end position="159"/>
    </location>
</feature>
<feature type="compositionally biased region" description="Polar residues" evidence="2">
    <location>
        <begin position="175"/>
        <end position="184"/>
    </location>
</feature>
<feature type="compositionally biased region" description="Basic and acidic residues" evidence="2">
    <location>
        <begin position="204"/>
        <end position="214"/>
    </location>
</feature>
<feature type="compositionally biased region" description="Basic and acidic residues" evidence="2">
    <location>
        <begin position="242"/>
        <end position="253"/>
    </location>
</feature>
<feature type="compositionally biased region" description="Basic and acidic residues" evidence="2">
    <location>
        <begin position="276"/>
        <end position="289"/>
    </location>
</feature>
<feature type="compositionally biased region" description="Basic and acidic residues" evidence="2">
    <location>
        <begin position="313"/>
        <end position="326"/>
    </location>
</feature>
<feature type="compositionally biased region" description="Basic and acidic residues" evidence="2">
    <location>
        <begin position="335"/>
        <end position="349"/>
    </location>
</feature>
<feature type="compositionally biased region" description="Basic and acidic residues" evidence="2">
    <location>
        <begin position="484"/>
        <end position="496"/>
    </location>
</feature>
<sequence>MVEADHPGKLFIGGLNRETNEKMLKAVFGKHGPISEVLLIKDRTSKSRGFAFITFENPADAKNAAKDMNGKSLHGKAIKVEQAKKPSFQSGGRRRPPASSRNRSPSGSLRSARGSRGGTRGWLPSQEGHLDDGGYTPDLKMSYSRGLIPVKRGPSSRSGGPPPKKSAPSAVARSNSWMGSQGPMSQRRENYGVPPRRATISSWRNDRMSTRHDGYATNDGNHPSCQETRDYAPPSRGYAYRDNGHSNRDEHSSRGYRNHRSSRETRDYAPPSRGHAYRDYGHSRRDESYSRGYRNRRSSRETREYAPPSRGHGYRDYGHSRRHESYSRGYRNHPSSRETRDYAPPHRDYAYRDYGHSSWDEHSSRGYSYHDGYGEALGRDHSEHLSGSSYRDALQRYGTSHGAPPARGPRMSYGGSTCHAYSNTRDRYGRSWESYSSCGDFHYCDREHVCRKDQRNPPSLGRVLPDPREAYGSSSYVASIVDGGESRSEKGDSSRY</sequence>
<gene>
    <name type="primary">RBMY1B</name>
</gene>
<evidence type="ECO:0000255" key="1">
    <source>
        <dbReference type="PROSITE-ProRule" id="PRU00176"/>
    </source>
</evidence>
<evidence type="ECO:0000256" key="2">
    <source>
        <dbReference type="SAM" id="MobiDB-lite"/>
    </source>
</evidence>
<keyword id="KW-0507">mRNA processing</keyword>
<keyword id="KW-0508">mRNA splicing</keyword>
<keyword id="KW-0539">Nucleus</keyword>
<keyword id="KW-1185">Reference proteome</keyword>
<keyword id="KW-0694">RNA-binding</keyword>
<organism>
    <name type="scientific">Homo sapiens</name>
    <name type="common">Human</name>
    <dbReference type="NCBI Taxonomy" id="9606"/>
    <lineage>
        <taxon>Eukaryota</taxon>
        <taxon>Metazoa</taxon>
        <taxon>Chordata</taxon>
        <taxon>Craniata</taxon>
        <taxon>Vertebrata</taxon>
        <taxon>Euteleostomi</taxon>
        <taxon>Mammalia</taxon>
        <taxon>Eutheria</taxon>
        <taxon>Euarchontoglires</taxon>
        <taxon>Primates</taxon>
        <taxon>Haplorrhini</taxon>
        <taxon>Catarrhini</taxon>
        <taxon>Hominidae</taxon>
        <taxon>Homo</taxon>
    </lineage>
</organism>
<name>RBY1B_HUMAN</name>
<protein>
    <recommendedName>
        <fullName>RNA-binding motif protein, Y chromosome, family 1 member B</fullName>
    </recommendedName>
</protein>